<keyword id="KW-0066">ATP synthesis</keyword>
<keyword id="KW-0067">ATP-binding</keyword>
<keyword id="KW-1003">Cell membrane</keyword>
<keyword id="KW-0139">CF(1)</keyword>
<keyword id="KW-0375">Hydrogen ion transport</keyword>
<keyword id="KW-0406">Ion transport</keyword>
<keyword id="KW-0472">Membrane</keyword>
<keyword id="KW-0547">Nucleotide-binding</keyword>
<keyword id="KW-1278">Translocase</keyword>
<keyword id="KW-0813">Transport</keyword>
<feature type="chain" id="PRO_0000302667" description="ATP synthase subunit alpha">
    <location>
        <begin position="1"/>
        <end position="554"/>
    </location>
</feature>
<feature type="region of interest" description="Disordered" evidence="2">
    <location>
        <begin position="528"/>
        <end position="554"/>
    </location>
</feature>
<feature type="compositionally biased region" description="Basic and acidic residues" evidence="2">
    <location>
        <begin position="535"/>
        <end position="554"/>
    </location>
</feature>
<feature type="binding site" evidence="1">
    <location>
        <begin position="172"/>
        <end position="179"/>
    </location>
    <ligand>
        <name>ATP</name>
        <dbReference type="ChEBI" id="CHEBI:30616"/>
    </ligand>
</feature>
<feature type="site" description="Required for activity" evidence="1">
    <location>
        <position position="373"/>
    </location>
</feature>
<accession>A0QCX6</accession>
<name>ATPA_MYCA1</name>
<reference key="1">
    <citation type="submission" date="2006-10" db="EMBL/GenBank/DDBJ databases">
        <authorList>
            <person name="Fleischmann R.D."/>
            <person name="Dodson R.J."/>
            <person name="Haft D.H."/>
            <person name="Merkel J.S."/>
            <person name="Nelson W.C."/>
            <person name="Fraser C.M."/>
        </authorList>
    </citation>
    <scope>NUCLEOTIDE SEQUENCE [LARGE SCALE GENOMIC DNA]</scope>
    <source>
        <strain>104</strain>
    </source>
</reference>
<gene>
    <name evidence="1" type="primary">atpA</name>
    <name type="ordered locus">MAV_1525</name>
</gene>
<organism>
    <name type="scientific">Mycobacterium avium (strain 104)</name>
    <dbReference type="NCBI Taxonomy" id="243243"/>
    <lineage>
        <taxon>Bacteria</taxon>
        <taxon>Bacillati</taxon>
        <taxon>Actinomycetota</taxon>
        <taxon>Actinomycetes</taxon>
        <taxon>Mycobacteriales</taxon>
        <taxon>Mycobacteriaceae</taxon>
        <taxon>Mycobacterium</taxon>
        <taxon>Mycobacterium avium complex (MAC)</taxon>
    </lineage>
</organism>
<evidence type="ECO:0000255" key="1">
    <source>
        <dbReference type="HAMAP-Rule" id="MF_01346"/>
    </source>
</evidence>
<evidence type="ECO:0000256" key="2">
    <source>
        <dbReference type="SAM" id="MobiDB-lite"/>
    </source>
</evidence>
<proteinExistence type="inferred from homology"/>
<protein>
    <recommendedName>
        <fullName evidence="1">ATP synthase subunit alpha</fullName>
        <ecNumber evidence="1">7.1.2.2</ecNumber>
    </recommendedName>
    <alternativeName>
        <fullName evidence="1">ATP synthase F1 sector subunit alpha</fullName>
    </alternativeName>
    <alternativeName>
        <fullName evidence="1">F-ATPase subunit alpha</fullName>
    </alternativeName>
</protein>
<comment type="function">
    <text evidence="1">Produces ATP from ADP in the presence of a proton gradient across the membrane. The alpha chain is a regulatory subunit.</text>
</comment>
<comment type="catalytic activity">
    <reaction evidence="1">
        <text>ATP + H2O + 4 H(+)(in) = ADP + phosphate + 5 H(+)(out)</text>
        <dbReference type="Rhea" id="RHEA:57720"/>
        <dbReference type="ChEBI" id="CHEBI:15377"/>
        <dbReference type="ChEBI" id="CHEBI:15378"/>
        <dbReference type="ChEBI" id="CHEBI:30616"/>
        <dbReference type="ChEBI" id="CHEBI:43474"/>
        <dbReference type="ChEBI" id="CHEBI:456216"/>
        <dbReference type="EC" id="7.1.2.2"/>
    </reaction>
</comment>
<comment type="subunit">
    <text evidence="1">F-type ATPases have 2 components, CF(1) - the catalytic core - and CF(0) - the membrane proton channel. CF(1) has five subunits: alpha(3), beta(3), gamma(1), delta(1), epsilon(1). CF(0) has three main subunits: a(1), b(2) and c(9-12). The alpha and beta chains form an alternating ring which encloses part of the gamma chain. CF(1) is attached to CF(0) by a central stalk formed by the gamma and epsilon chains, while a peripheral stalk is formed by the delta and b chains.</text>
</comment>
<comment type="subcellular location">
    <subcellularLocation>
        <location evidence="1">Cell membrane</location>
        <topology evidence="1">Peripheral membrane protein</topology>
    </subcellularLocation>
</comment>
<comment type="similarity">
    <text evidence="1">Belongs to the ATPase alpha/beta chains family.</text>
</comment>
<dbReference type="EC" id="7.1.2.2" evidence="1"/>
<dbReference type="EMBL" id="CP000479">
    <property type="protein sequence ID" value="ABK67333.1"/>
    <property type="molecule type" value="Genomic_DNA"/>
</dbReference>
<dbReference type="RefSeq" id="WP_003877295.1">
    <property type="nucleotide sequence ID" value="NC_008595.1"/>
</dbReference>
<dbReference type="SMR" id="A0QCX6"/>
<dbReference type="GeneID" id="75269287"/>
<dbReference type="KEGG" id="mav:MAV_1525"/>
<dbReference type="HOGENOM" id="CLU_010091_2_1_11"/>
<dbReference type="Proteomes" id="UP000001574">
    <property type="component" value="Chromosome"/>
</dbReference>
<dbReference type="GO" id="GO:0005886">
    <property type="term" value="C:plasma membrane"/>
    <property type="evidence" value="ECO:0007669"/>
    <property type="project" value="UniProtKB-SubCell"/>
</dbReference>
<dbReference type="GO" id="GO:0045259">
    <property type="term" value="C:proton-transporting ATP synthase complex"/>
    <property type="evidence" value="ECO:0007669"/>
    <property type="project" value="UniProtKB-KW"/>
</dbReference>
<dbReference type="GO" id="GO:0043531">
    <property type="term" value="F:ADP binding"/>
    <property type="evidence" value="ECO:0007669"/>
    <property type="project" value="TreeGrafter"/>
</dbReference>
<dbReference type="GO" id="GO:0005524">
    <property type="term" value="F:ATP binding"/>
    <property type="evidence" value="ECO:0007669"/>
    <property type="project" value="UniProtKB-UniRule"/>
</dbReference>
<dbReference type="GO" id="GO:0046933">
    <property type="term" value="F:proton-transporting ATP synthase activity, rotational mechanism"/>
    <property type="evidence" value="ECO:0007669"/>
    <property type="project" value="UniProtKB-UniRule"/>
</dbReference>
<dbReference type="CDD" id="cd18113">
    <property type="entry name" value="ATP-synt_F1_alpha_C"/>
    <property type="match status" value="1"/>
</dbReference>
<dbReference type="CDD" id="cd18116">
    <property type="entry name" value="ATP-synt_F1_alpha_N"/>
    <property type="match status" value="1"/>
</dbReference>
<dbReference type="CDD" id="cd01132">
    <property type="entry name" value="F1-ATPase_alpha_CD"/>
    <property type="match status" value="1"/>
</dbReference>
<dbReference type="FunFam" id="1.20.150.20:FF:000001">
    <property type="entry name" value="ATP synthase subunit alpha"/>
    <property type="match status" value="1"/>
</dbReference>
<dbReference type="FunFam" id="2.40.30.20:FF:000001">
    <property type="entry name" value="ATP synthase subunit alpha"/>
    <property type="match status" value="1"/>
</dbReference>
<dbReference type="FunFam" id="3.40.50.300:FF:000002">
    <property type="entry name" value="ATP synthase subunit alpha"/>
    <property type="match status" value="1"/>
</dbReference>
<dbReference type="Gene3D" id="2.40.30.20">
    <property type="match status" value="1"/>
</dbReference>
<dbReference type="Gene3D" id="1.20.150.20">
    <property type="entry name" value="ATP synthase alpha/beta chain, C-terminal domain"/>
    <property type="match status" value="1"/>
</dbReference>
<dbReference type="Gene3D" id="3.40.50.300">
    <property type="entry name" value="P-loop containing nucleotide triphosphate hydrolases"/>
    <property type="match status" value="1"/>
</dbReference>
<dbReference type="HAMAP" id="MF_01346">
    <property type="entry name" value="ATP_synth_alpha_bact"/>
    <property type="match status" value="1"/>
</dbReference>
<dbReference type="InterPro" id="IPR023366">
    <property type="entry name" value="ATP_synth_asu-like_sf"/>
</dbReference>
<dbReference type="InterPro" id="IPR000793">
    <property type="entry name" value="ATP_synth_asu_C"/>
</dbReference>
<dbReference type="InterPro" id="IPR038376">
    <property type="entry name" value="ATP_synth_asu_C_sf"/>
</dbReference>
<dbReference type="InterPro" id="IPR033732">
    <property type="entry name" value="ATP_synth_F1_a_nt-bd_dom"/>
</dbReference>
<dbReference type="InterPro" id="IPR005294">
    <property type="entry name" value="ATP_synth_F1_asu"/>
</dbReference>
<dbReference type="InterPro" id="IPR020003">
    <property type="entry name" value="ATPase_a/bsu_AS"/>
</dbReference>
<dbReference type="InterPro" id="IPR004100">
    <property type="entry name" value="ATPase_F1/V1/A1_a/bsu_N"/>
</dbReference>
<dbReference type="InterPro" id="IPR036121">
    <property type="entry name" value="ATPase_F1/V1/A1_a/bsu_N_sf"/>
</dbReference>
<dbReference type="InterPro" id="IPR000194">
    <property type="entry name" value="ATPase_F1/V1/A1_a/bsu_nucl-bd"/>
</dbReference>
<dbReference type="InterPro" id="IPR027417">
    <property type="entry name" value="P-loop_NTPase"/>
</dbReference>
<dbReference type="NCBIfam" id="TIGR00962">
    <property type="entry name" value="atpA"/>
    <property type="match status" value="1"/>
</dbReference>
<dbReference type="NCBIfam" id="NF009884">
    <property type="entry name" value="PRK13343.1"/>
    <property type="match status" value="1"/>
</dbReference>
<dbReference type="PANTHER" id="PTHR48082">
    <property type="entry name" value="ATP SYNTHASE SUBUNIT ALPHA, MITOCHONDRIAL"/>
    <property type="match status" value="1"/>
</dbReference>
<dbReference type="PANTHER" id="PTHR48082:SF2">
    <property type="entry name" value="ATP SYNTHASE SUBUNIT ALPHA, MITOCHONDRIAL"/>
    <property type="match status" value="1"/>
</dbReference>
<dbReference type="Pfam" id="PF00006">
    <property type="entry name" value="ATP-synt_ab"/>
    <property type="match status" value="1"/>
</dbReference>
<dbReference type="Pfam" id="PF00306">
    <property type="entry name" value="ATP-synt_ab_C"/>
    <property type="match status" value="1"/>
</dbReference>
<dbReference type="Pfam" id="PF02874">
    <property type="entry name" value="ATP-synt_ab_N"/>
    <property type="match status" value="1"/>
</dbReference>
<dbReference type="PIRSF" id="PIRSF039088">
    <property type="entry name" value="F_ATPase_subunit_alpha"/>
    <property type="match status" value="1"/>
</dbReference>
<dbReference type="SUPFAM" id="SSF47917">
    <property type="entry name" value="C-terminal domain of alpha and beta subunits of F1 ATP synthase"/>
    <property type="match status" value="1"/>
</dbReference>
<dbReference type="SUPFAM" id="SSF50615">
    <property type="entry name" value="N-terminal domain of alpha and beta subunits of F1 ATP synthase"/>
    <property type="match status" value="1"/>
</dbReference>
<dbReference type="SUPFAM" id="SSF52540">
    <property type="entry name" value="P-loop containing nucleoside triphosphate hydrolases"/>
    <property type="match status" value="1"/>
</dbReference>
<dbReference type="PROSITE" id="PS00152">
    <property type="entry name" value="ATPASE_ALPHA_BETA"/>
    <property type="match status" value="1"/>
</dbReference>
<sequence length="554" mass="59993">MAELTISADDIQSAIEEYVGSFTSDTSREEVGTVVDAGDGIAHVEGLPSVMTQELLEFPGGVLGVALNLDEHSVGAVILGDFEKIEEGQQVKRTGEVLSVPVGDAFLGRVVNPLGQPIDGQGDIETDIRRALEIQAPSVVQRQSVKEPLQTGIKAIDAMTPIGRGQRQLIIGDRKTGKTAVCVDTILNQRQNWESGDEKKQVRCVYVAIGQKGTTIASVRRALEEGGAMDYTTIVAAPASDSAGFKWLAPYTGSAIAQHWMYDGKHVLIVFDDLSKQAEAYRAISLLLRRPPGREAYPGDVFYLHSRLLERCAKLSDELGGGSMTGLPIIETKANDISAYIPTNVISITDGQCFLESDLFNQGVRPAINVGVSVSRVGGAAQIKAMKEVAGSLRLDLSQFRELEAFAAFASDLDATSKAQLDRGARLVELLKQPQYQPMPVEEQVVSIFLGTGGHLDSVPVEDVRRFETELLDHMRASEDKILAGIRDTQKLSDEAAEELEKVINNFKKGFAATGGASVVPDEHVEALDEEELEKESVKVKKPAPEKKAKKEQK</sequence>